<organism>
    <name type="scientific">Cichorium intybus</name>
    <name type="common">Chicory</name>
    <dbReference type="NCBI Taxonomy" id="13427"/>
    <lineage>
        <taxon>Eukaryota</taxon>
        <taxon>Viridiplantae</taxon>
        <taxon>Streptophyta</taxon>
        <taxon>Embryophyta</taxon>
        <taxon>Tracheophyta</taxon>
        <taxon>Spermatophyta</taxon>
        <taxon>Magnoliopsida</taxon>
        <taxon>eudicotyledons</taxon>
        <taxon>Gunneridae</taxon>
        <taxon>Pentapetalae</taxon>
        <taxon>asterids</taxon>
        <taxon>campanulids</taxon>
        <taxon>Asterales</taxon>
        <taxon>Asteraceae</taxon>
        <taxon>Cichorioideae</taxon>
        <taxon>Cichorieae</taxon>
        <taxon>Cichoriinae</taxon>
        <taxon>Cichorium</taxon>
    </lineage>
</organism>
<proteinExistence type="evidence at protein level"/>
<dbReference type="EC" id="4.2.3.23"/>
<dbReference type="EMBL" id="AF498000">
    <property type="protein sequence ID" value="AAM21659.1"/>
    <property type="molecule type" value="mRNA"/>
</dbReference>
<dbReference type="SMR" id="Q8LSC2"/>
<dbReference type="KEGG" id="ag:AAM21659"/>
<dbReference type="BioCyc" id="MetaCyc:MONOMER-13557"/>
<dbReference type="BRENDA" id="4.2.3.23">
    <property type="organism ID" value="1385"/>
</dbReference>
<dbReference type="UniPathway" id="UPA00213"/>
<dbReference type="GO" id="GO:0034005">
    <property type="term" value="F:germacrene-A synthase activity"/>
    <property type="evidence" value="ECO:0000314"/>
    <property type="project" value="UniProtKB"/>
</dbReference>
<dbReference type="GO" id="GO:0000287">
    <property type="term" value="F:magnesium ion binding"/>
    <property type="evidence" value="ECO:0007669"/>
    <property type="project" value="InterPro"/>
</dbReference>
<dbReference type="GO" id="GO:0016102">
    <property type="term" value="P:diterpenoid biosynthetic process"/>
    <property type="evidence" value="ECO:0007669"/>
    <property type="project" value="InterPro"/>
</dbReference>
<dbReference type="GO" id="GO:0045338">
    <property type="term" value="P:farnesyl diphosphate metabolic process"/>
    <property type="evidence" value="ECO:0000314"/>
    <property type="project" value="UniProtKB"/>
</dbReference>
<dbReference type="CDD" id="cd00684">
    <property type="entry name" value="Terpene_cyclase_plant_C1"/>
    <property type="match status" value="1"/>
</dbReference>
<dbReference type="FunFam" id="1.10.600.10:FF:000007">
    <property type="entry name" value="Isoprene synthase, chloroplastic"/>
    <property type="match status" value="1"/>
</dbReference>
<dbReference type="FunFam" id="1.50.10.130:FF:000001">
    <property type="entry name" value="Isoprene synthase, chloroplastic"/>
    <property type="match status" value="1"/>
</dbReference>
<dbReference type="Gene3D" id="1.10.600.10">
    <property type="entry name" value="Farnesyl Diphosphate Synthase"/>
    <property type="match status" value="1"/>
</dbReference>
<dbReference type="Gene3D" id="1.50.10.130">
    <property type="entry name" value="Terpene synthase, N-terminal domain"/>
    <property type="match status" value="1"/>
</dbReference>
<dbReference type="InterPro" id="IPR008949">
    <property type="entry name" value="Isoprenoid_synthase_dom_sf"/>
</dbReference>
<dbReference type="InterPro" id="IPR034741">
    <property type="entry name" value="Terpene_cyclase-like_1_C"/>
</dbReference>
<dbReference type="InterPro" id="IPR044814">
    <property type="entry name" value="Terpene_cyclase_plant_C1"/>
</dbReference>
<dbReference type="InterPro" id="IPR001906">
    <property type="entry name" value="Terpene_synth_N"/>
</dbReference>
<dbReference type="InterPro" id="IPR036965">
    <property type="entry name" value="Terpene_synth_N_sf"/>
</dbReference>
<dbReference type="InterPro" id="IPR050148">
    <property type="entry name" value="Terpene_synthase-like"/>
</dbReference>
<dbReference type="InterPro" id="IPR005630">
    <property type="entry name" value="Terpene_synthase_metal-bd"/>
</dbReference>
<dbReference type="InterPro" id="IPR008930">
    <property type="entry name" value="Terpenoid_cyclase/PrenylTrfase"/>
</dbReference>
<dbReference type="PANTHER" id="PTHR31225:SF120">
    <property type="entry name" value="GERMACRENE-A SYNTHASE"/>
    <property type="match status" value="1"/>
</dbReference>
<dbReference type="PANTHER" id="PTHR31225">
    <property type="entry name" value="OS04G0344100 PROTEIN-RELATED"/>
    <property type="match status" value="1"/>
</dbReference>
<dbReference type="Pfam" id="PF01397">
    <property type="entry name" value="Terpene_synth"/>
    <property type="match status" value="1"/>
</dbReference>
<dbReference type="Pfam" id="PF03936">
    <property type="entry name" value="Terpene_synth_C"/>
    <property type="match status" value="1"/>
</dbReference>
<dbReference type="SFLD" id="SFLDS00005">
    <property type="entry name" value="Isoprenoid_Synthase_Type_I"/>
    <property type="match status" value="1"/>
</dbReference>
<dbReference type="SFLD" id="SFLDG01019">
    <property type="entry name" value="Terpene_Cyclase_Like_1_C_Termi"/>
    <property type="match status" value="1"/>
</dbReference>
<dbReference type="SUPFAM" id="SSF48239">
    <property type="entry name" value="Terpenoid cyclases/Protein prenyltransferases"/>
    <property type="match status" value="1"/>
</dbReference>
<dbReference type="SUPFAM" id="SSF48576">
    <property type="entry name" value="Terpenoid synthases"/>
    <property type="match status" value="1"/>
</dbReference>
<comment type="function">
    <text evidence="2">Involved in sesquiterpene lactone biosynthesis. Produces exclusively (+)-germacrene A.</text>
</comment>
<comment type="catalytic activity">
    <reaction evidence="2">
        <text>(2E,6E)-farnesyl diphosphate = (+)-(R)-germacrene A + diphosphate</text>
        <dbReference type="Rhea" id="RHEA:12516"/>
        <dbReference type="ChEBI" id="CHEBI:33019"/>
        <dbReference type="ChEBI" id="CHEBI:41595"/>
        <dbReference type="ChEBI" id="CHEBI:175763"/>
        <dbReference type="EC" id="4.2.3.23"/>
    </reaction>
</comment>
<comment type="cofactor">
    <cofactor evidence="1">
        <name>Mg(2+)</name>
        <dbReference type="ChEBI" id="CHEBI:18420"/>
    </cofactor>
    <text evidence="1">Binds 3 Mg(2+) ions per subunit.</text>
</comment>
<comment type="biophysicochemical properties">
    <kinetics>
        <KM evidence="2">3.2 uM for 2-trans,6-trans-farnesyl diphosphate</KM>
        <Vmax evidence="2">21.5 pmol/h/mg enzyme</Vmax>
    </kinetics>
    <phDependence>
        <text evidence="2">Optimum pH is 7.0.</text>
    </phDependence>
</comment>
<comment type="pathway">
    <text>Secondary metabolite biosynthesis; terpenoid biosynthesis.</text>
</comment>
<comment type="tissue specificity">
    <text evidence="2">Expressed in roots and in green and etiolated seedlings.</text>
</comment>
<comment type="domain">
    <text>The Asp-Asp-Xaa-Xaa-Asp/Glu (DDXXD/E) motif is important for the catalytic activity, presumably through binding to Mg(2+).</text>
</comment>
<comment type="similarity">
    <text evidence="3">Belongs to the terpene synthase family.</text>
</comment>
<name>GASS_CICIN</name>
<keyword id="KW-0456">Lyase</keyword>
<keyword id="KW-0460">Magnesium</keyword>
<keyword id="KW-0479">Metal-binding</keyword>
<reference key="1">
    <citation type="journal article" date="2002" name="Plant Physiol.">
        <title>Isolation and characterization of two germacrene A synthase cDNA clones from chicory.</title>
        <authorList>
            <person name="Bouwmeester H.J."/>
            <person name="Kodde J."/>
            <person name="Verstappen F.W."/>
            <person name="Altug I.G."/>
            <person name="de Kraker J.W."/>
            <person name="Wallaart T.E."/>
        </authorList>
    </citation>
    <scope>NUCLEOTIDE SEQUENCE [MRNA]</scope>
    <scope>FUNCTION</scope>
    <scope>CATALYTIC ACTIVITY</scope>
    <scope>TISSUE SPECIFICITY</scope>
    <scope>BIOPHYSICOCHEMICAL PROPERTIES</scope>
</reference>
<evidence type="ECO:0000250" key="1"/>
<evidence type="ECO:0000269" key="2">
    <source>
    </source>
</evidence>
<evidence type="ECO:0000305" key="3"/>
<accession>Q8LSC2</accession>
<feature type="chain" id="PRO_0000398154" description="Germacrene A synthase short form">
    <location>
        <begin position="1"/>
        <end position="558"/>
    </location>
</feature>
<feature type="short sequence motif" description="DDXXD motif">
    <location>
        <begin position="311"/>
        <end position="315"/>
    </location>
</feature>
<feature type="binding site" evidence="1">
    <location>
        <position position="311"/>
    </location>
    <ligand>
        <name>Mg(2+)</name>
        <dbReference type="ChEBI" id="CHEBI:18420"/>
        <label>1</label>
    </ligand>
</feature>
<feature type="binding site" evidence="1">
    <location>
        <position position="311"/>
    </location>
    <ligand>
        <name>Mg(2+)</name>
        <dbReference type="ChEBI" id="CHEBI:18420"/>
        <label>2</label>
    </ligand>
</feature>
<feature type="binding site" evidence="1">
    <location>
        <position position="315"/>
    </location>
    <ligand>
        <name>Mg(2+)</name>
        <dbReference type="ChEBI" id="CHEBI:18420"/>
        <label>1</label>
    </ligand>
</feature>
<feature type="binding site" evidence="1">
    <location>
        <position position="315"/>
    </location>
    <ligand>
        <name>Mg(2+)</name>
        <dbReference type="ChEBI" id="CHEBI:18420"/>
        <label>2</label>
    </ligand>
</feature>
<feature type="binding site" evidence="1">
    <location>
        <position position="455"/>
    </location>
    <ligand>
        <name>Mg(2+)</name>
        <dbReference type="ChEBI" id="CHEBI:18420"/>
        <label>3</label>
    </ligand>
</feature>
<feature type="binding site" evidence="1">
    <location>
        <position position="459"/>
    </location>
    <ligand>
        <name>Mg(2+)</name>
        <dbReference type="ChEBI" id="CHEBI:18420"/>
        <label>3</label>
    </ligand>
</feature>
<feature type="binding site" evidence="1">
    <location>
        <position position="463"/>
    </location>
    <ligand>
        <name>Mg(2+)</name>
        <dbReference type="ChEBI" id="CHEBI:18420"/>
        <label>3</label>
    </ligand>
</feature>
<protein>
    <recommendedName>
        <fullName>Germacrene A synthase short form</fullName>
        <shortName>CiGASsh</shortName>
        <ecNumber>4.2.3.23</ecNumber>
    </recommendedName>
</protein>
<sequence>MAAVEANGTFQANTKTTEPVRPLANFPPSVWGDRFLSFSLDTTELEGYAKAMEEPKEEVRKLIVDPTMDSNKKLSLIYSVHRLGLTYLFLQEIEAQLDKLFKEFNLQDYDEFDLYTTSINFQVFRHLGHKLPCDVFNKFKDSSSGTFKESITNDVKGMLGLYESAQLRLRGEPILDEASAFTETQLKSVVNTLEGNLAKQVMQSLRRPFHQGMPMVEARMYFSNYDEECSTHESLPKLAKLHFNYLQLQQKEELRIVSKWWKDMRFQETTPYIRDRVPEIYLWILGLYFEPRYSLARIIATKITLFLVVLDDTYDAYATIEEIRLLTDAINRWDISAMEQIPEYIRPFYKILLDEYAELEKQLAKEGRAKSVIASKEAFQDIARGYLEEAEWTNSGYVASFPEYMKNGLITSAYNVISKSALVGMGEMVGEDALAWYESHPKTLQASELISRLQDDVMTYQFERERGQSATGVDSYIKTYGVTEKEAIDELNKMIENAWKDINEGCLKPREVSMDLLAPILNLARMIDVVYRYDDGFTFPGKTMKEYITLLFVGSSPM</sequence>